<evidence type="ECO:0000255" key="1">
    <source>
        <dbReference type="HAMAP-Rule" id="MF_01261"/>
    </source>
</evidence>
<gene>
    <name evidence="1" type="primary">cca</name>
    <name type="ordered locus">c3806</name>
</gene>
<name>CCA_ECOL6</name>
<accession>Q8CXX6</accession>
<comment type="function">
    <text evidence="1">Catalyzes the addition and repair of the essential 3'-terminal CCA sequence in tRNAs without using a nucleic acid template. Adds these three nucleotides in the order of C, C, and A to the tRNA nucleotide-73, using CTP and ATP as substrates and producing inorganic pyrophosphate. tRNA 3'-terminal CCA addition is required both for tRNA processing and repair. Also involved in tRNA surveillance by mediating tandem CCA addition to generate a CCACCA at the 3' terminus of unstable tRNAs. While stable tRNAs receive only 3'-terminal CCA, unstable tRNAs are marked with CCACCA and rapidly degraded.</text>
</comment>
<comment type="catalytic activity">
    <reaction evidence="1">
        <text>a tRNA precursor + 2 CTP + ATP = a tRNA with a 3' CCA end + 3 diphosphate</text>
        <dbReference type="Rhea" id="RHEA:14433"/>
        <dbReference type="Rhea" id="RHEA-COMP:10465"/>
        <dbReference type="Rhea" id="RHEA-COMP:10468"/>
        <dbReference type="ChEBI" id="CHEBI:30616"/>
        <dbReference type="ChEBI" id="CHEBI:33019"/>
        <dbReference type="ChEBI" id="CHEBI:37563"/>
        <dbReference type="ChEBI" id="CHEBI:74896"/>
        <dbReference type="ChEBI" id="CHEBI:83071"/>
        <dbReference type="EC" id="2.7.7.72"/>
    </reaction>
</comment>
<comment type="catalytic activity">
    <reaction evidence="1">
        <text>a tRNA with a 3' CCA end + 2 CTP + ATP = a tRNA with a 3' CCACCA end + 3 diphosphate</text>
        <dbReference type="Rhea" id="RHEA:76235"/>
        <dbReference type="Rhea" id="RHEA-COMP:10468"/>
        <dbReference type="Rhea" id="RHEA-COMP:18655"/>
        <dbReference type="ChEBI" id="CHEBI:30616"/>
        <dbReference type="ChEBI" id="CHEBI:33019"/>
        <dbReference type="ChEBI" id="CHEBI:37563"/>
        <dbReference type="ChEBI" id="CHEBI:83071"/>
        <dbReference type="ChEBI" id="CHEBI:195187"/>
    </reaction>
    <physiologicalReaction direction="left-to-right" evidence="1">
        <dbReference type="Rhea" id="RHEA:76236"/>
    </physiologicalReaction>
</comment>
<comment type="cofactor">
    <cofactor evidence="1">
        <name>Mg(2+)</name>
        <dbReference type="ChEBI" id="CHEBI:18420"/>
    </cofactor>
    <text evidence="1">Magnesium is required for nucleotidyltransferase activity.</text>
</comment>
<comment type="cofactor">
    <cofactor evidence="1">
        <name>Ni(2+)</name>
        <dbReference type="ChEBI" id="CHEBI:49786"/>
    </cofactor>
    <text evidence="1">Nickel for phosphatase activity.</text>
</comment>
<comment type="subunit">
    <text evidence="1">Monomer. Can also form homodimers and oligomers.</text>
</comment>
<comment type="domain">
    <text evidence="1">Comprises two domains: an N-terminal domain containing the nucleotidyltransferase activity and a C-terminal HD domain associated with both phosphodiesterase and phosphatase activities.</text>
</comment>
<comment type="miscellaneous">
    <text evidence="1">A single active site specifically recognizes both ATP and CTP and is responsible for their addition.</text>
</comment>
<comment type="similarity">
    <text evidence="1">Belongs to the tRNA nucleotidyltransferase/poly(A) polymerase family. Bacterial CCA-adding enzyme type 1 subfamily.</text>
</comment>
<keyword id="KW-0067">ATP-binding</keyword>
<keyword id="KW-0378">Hydrolase</keyword>
<keyword id="KW-0460">Magnesium</keyword>
<keyword id="KW-0479">Metal-binding</keyword>
<keyword id="KW-0511">Multifunctional enzyme</keyword>
<keyword id="KW-0533">Nickel</keyword>
<keyword id="KW-0547">Nucleotide-binding</keyword>
<keyword id="KW-0548">Nucleotidyltransferase</keyword>
<keyword id="KW-1185">Reference proteome</keyword>
<keyword id="KW-0692">RNA repair</keyword>
<keyword id="KW-0694">RNA-binding</keyword>
<keyword id="KW-0808">Transferase</keyword>
<keyword id="KW-0819">tRNA processing</keyword>
<reference key="1">
    <citation type="journal article" date="2002" name="Proc. Natl. Acad. Sci. U.S.A.">
        <title>Extensive mosaic structure revealed by the complete genome sequence of uropathogenic Escherichia coli.</title>
        <authorList>
            <person name="Welch R.A."/>
            <person name="Burland V."/>
            <person name="Plunkett G. III"/>
            <person name="Redford P."/>
            <person name="Roesch P."/>
            <person name="Rasko D."/>
            <person name="Buckles E.L."/>
            <person name="Liou S.-R."/>
            <person name="Boutin A."/>
            <person name="Hackett J."/>
            <person name="Stroud D."/>
            <person name="Mayhew G.F."/>
            <person name="Rose D.J."/>
            <person name="Zhou S."/>
            <person name="Schwartz D.C."/>
            <person name="Perna N.T."/>
            <person name="Mobley H.L.T."/>
            <person name="Donnenberg M.S."/>
            <person name="Blattner F.R."/>
        </authorList>
    </citation>
    <scope>NUCLEOTIDE SEQUENCE [LARGE SCALE GENOMIC DNA]</scope>
    <source>
        <strain>CFT073 / ATCC 700928 / UPEC</strain>
    </source>
</reference>
<dbReference type="EC" id="2.7.7.72" evidence="1"/>
<dbReference type="EC" id="3.1.3.-" evidence="1"/>
<dbReference type="EC" id="3.1.4.-" evidence="1"/>
<dbReference type="EMBL" id="AE014075">
    <property type="protein sequence ID" value="AAN82251.1"/>
    <property type="molecule type" value="Genomic_DNA"/>
</dbReference>
<dbReference type="RefSeq" id="WP_000708507.1">
    <property type="nucleotide sequence ID" value="NZ_CP051263.1"/>
</dbReference>
<dbReference type="SMR" id="Q8CXX6"/>
<dbReference type="STRING" id="199310.c3806"/>
<dbReference type="KEGG" id="ecc:c3806"/>
<dbReference type="eggNOG" id="COG0617">
    <property type="taxonomic scope" value="Bacteria"/>
</dbReference>
<dbReference type="HOGENOM" id="CLU_015961_1_1_6"/>
<dbReference type="BioCyc" id="ECOL199310:C3806-MONOMER"/>
<dbReference type="Proteomes" id="UP000001410">
    <property type="component" value="Chromosome"/>
</dbReference>
<dbReference type="GO" id="GO:0005524">
    <property type="term" value="F:ATP binding"/>
    <property type="evidence" value="ECO:0007669"/>
    <property type="project" value="UniProtKB-UniRule"/>
</dbReference>
<dbReference type="GO" id="GO:0004810">
    <property type="term" value="F:CCA tRNA nucleotidyltransferase activity"/>
    <property type="evidence" value="ECO:0007669"/>
    <property type="project" value="UniProtKB-UniRule"/>
</dbReference>
<dbReference type="GO" id="GO:0004112">
    <property type="term" value="F:cyclic-nucleotide phosphodiesterase activity"/>
    <property type="evidence" value="ECO:0007669"/>
    <property type="project" value="UniProtKB-UniRule"/>
</dbReference>
<dbReference type="GO" id="GO:0000287">
    <property type="term" value="F:magnesium ion binding"/>
    <property type="evidence" value="ECO:0007669"/>
    <property type="project" value="UniProtKB-UniRule"/>
</dbReference>
<dbReference type="GO" id="GO:0016791">
    <property type="term" value="F:phosphatase activity"/>
    <property type="evidence" value="ECO:0007669"/>
    <property type="project" value="UniProtKB-UniRule"/>
</dbReference>
<dbReference type="GO" id="GO:0000049">
    <property type="term" value="F:tRNA binding"/>
    <property type="evidence" value="ECO:0007669"/>
    <property type="project" value="UniProtKB-UniRule"/>
</dbReference>
<dbReference type="GO" id="GO:0042245">
    <property type="term" value="P:RNA repair"/>
    <property type="evidence" value="ECO:0007669"/>
    <property type="project" value="UniProtKB-KW"/>
</dbReference>
<dbReference type="GO" id="GO:0001680">
    <property type="term" value="P:tRNA 3'-terminal CCA addition"/>
    <property type="evidence" value="ECO:0007669"/>
    <property type="project" value="UniProtKB-UniRule"/>
</dbReference>
<dbReference type="CDD" id="cd00077">
    <property type="entry name" value="HDc"/>
    <property type="match status" value="1"/>
</dbReference>
<dbReference type="CDD" id="cd05398">
    <property type="entry name" value="NT_ClassII-CCAase"/>
    <property type="match status" value="1"/>
</dbReference>
<dbReference type="FunFam" id="1.10.3090.10:FF:000001">
    <property type="entry name" value="Multifunctional CCA protein"/>
    <property type="match status" value="1"/>
</dbReference>
<dbReference type="FunFam" id="3.30.460.10:FF:000016">
    <property type="entry name" value="Multifunctional CCA protein"/>
    <property type="match status" value="1"/>
</dbReference>
<dbReference type="Gene3D" id="3.30.460.10">
    <property type="entry name" value="Beta Polymerase, domain 2"/>
    <property type="match status" value="1"/>
</dbReference>
<dbReference type="Gene3D" id="1.10.3090.10">
    <property type="entry name" value="cca-adding enzyme, domain 2"/>
    <property type="match status" value="1"/>
</dbReference>
<dbReference type="HAMAP" id="MF_01261">
    <property type="entry name" value="CCA_bact_type1"/>
    <property type="match status" value="1"/>
</dbReference>
<dbReference type="HAMAP" id="MF_01262">
    <property type="entry name" value="CCA_bact_type2"/>
    <property type="match status" value="1"/>
</dbReference>
<dbReference type="InterPro" id="IPR012006">
    <property type="entry name" value="CCA_bact"/>
</dbReference>
<dbReference type="InterPro" id="IPR003607">
    <property type="entry name" value="HD/PDEase_dom"/>
</dbReference>
<dbReference type="InterPro" id="IPR006674">
    <property type="entry name" value="HD_domain"/>
</dbReference>
<dbReference type="InterPro" id="IPR043519">
    <property type="entry name" value="NT_sf"/>
</dbReference>
<dbReference type="InterPro" id="IPR002646">
    <property type="entry name" value="PolA_pol_head_dom"/>
</dbReference>
<dbReference type="InterPro" id="IPR032828">
    <property type="entry name" value="PolyA_RNA-bd"/>
</dbReference>
<dbReference type="InterPro" id="IPR050124">
    <property type="entry name" value="tRNA_CCA-adding_enzyme"/>
</dbReference>
<dbReference type="NCBIfam" id="NF008137">
    <property type="entry name" value="PRK10885.1"/>
    <property type="match status" value="1"/>
</dbReference>
<dbReference type="PANTHER" id="PTHR47545">
    <property type="entry name" value="MULTIFUNCTIONAL CCA PROTEIN"/>
    <property type="match status" value="1"/>
</dbReference>
<dbReference type="PANTHER" id="PTHR47545:SF1">
    <property type="entry name" value="MULTIFUNCTIONAL CCA PROTEIN"/>
    <property type="match status" value="1"/>
</dbReference>
<dbReference type="Pfam" id="PF01966">
    <property type="entry name" value="HD"/>
    <property type="match status" value="1"/>
</dbReference>
<dbReference type="Pfam" id="PF01743">
    <property type="entry name" value="PolyA_pol"/>
    <property type="match status" value="1"/>
</dbReference>
<dbReference type="Pfam" id="PF12627">
    <property type="entry name" value="PolyA_pol_RNAbd"/>
    <property type="match status" value="1"/>
</dbReference>
<dbReference type="PIRSF" id="PIRSF000813">
    <property type="entry name" value="CCA_bact"/>
    <property type="match status" value="1"/>
</dbReference>
<dbReference type="SUPFAM" id="SSF81301">
    <property type="entry name" value="Nucleotidyltransferase"/>
    <property type="match status" value="1"/>
</dbReference>
<dbReference type="SUPFAM" id="SSF81891">
    <property type="entry name" value="Poly A polymerase C-terminal region-like"/>
    <property type="match status" value="1"/>
</dbReference>
<dbReference type="PROSITE" id="PS51831">
    <property type="entry name" value="HD"/>
    <property type="match status" value="1"/>
</dbReference>
<organism>
    <name type="scientific">Escherichia coli O6:H1 (strain CFT073 / ATCC 700928 / UPEC)</name>
    <dbReference type="NCBI Taxonomy" id="199310"/>
    <lineage>
        <taxon>Bacteria</taxon>
        <taxon>Pseudomonadati</taxon>
        <taxon>Pseudomonadota</taxon>
        <taxon>Gammaproteobacteria</taxon>
        <taxon>Enterobacterales</taxon>
        <taxon>Enterobacteriaceae</taxon>
        <taxon>Escherichia</taxon>
    </lineage>
</organism>
<sequence>MKIYLVGGAVRDALLGLPVKDRDWVVVGSTPQEMLDAGYQQVGRDFPVFLHPQTHEEYALARTERKSGSGYTGFTCYAAPDVTLEDDLKRRDLTINALAQDDNGEIIDPYNGLGDLQNRLLRHVSPAFGEDPLRVLRVARFAARYAHLSFRIADETLALMREMTHAGELEHLTPERVWKETENALTTRNPQVFFQVLRDCGALRVLFPEIDALFGVPAPARWHPEIDTGIHTLMTLSMAAMLSPQVDVRFATLCHDLGKGLTPPELWPRHHGHGPAGVKLVEQLCQRLRVPNEILDLARLVAEFHDLIHTFPMLNPKTIVKLFDSIDAWRKPQRVEQLALTSEADVRGRTGFESADYPQGRWLREAWEVAQSVPTKAVVEAGFKGVEIREELTRRRIAAVASWKEQRCPKPD</sequence>
<feature type="chain" id="PRO_0000138977" description="Multifunctional CCA protein">
    <location>
        <begin position="1"/>
        <end position="412"/>
    </location>
</feature>
<feature type="domain" description="HD" evidence="1">
    <location>
        <begin position="228"/>
        <end position="329"/>
    </location>
</feature>
<feature type="binding site" evidence="1">
    <location>
        <position position="8"/>
    </location>
    <ligand>
        <name>ATP</name>
        <dbReference type="ChEBI" id="CHEBI:30616"/>
    </ligand>
</feature>
<feature type="binding site" evidence="1">
    <location>
        <position position="8"/>
    </location>
    <ligand>
        <name>CTP</name>
        <dbReference type="ChEBI" id="CHEBI:37563"/>
    </ligand>
</feature>
<feature type="binding site" evidence="1">
    <location>
        <position position="11"/>
    </location>
    <ligand>
        <name>ATP</name>
        <dbReference type="ChEBI" id="CHEBI:30616"/>
    </ligand>
</feature>
<feature type="binding site" evidence="1">
    <location>
        <position position="11"/>
    </location>
    <ligand>
        <name>CTP</name>
        <dbReference type="ChEBI" id="CHEBI:37563"/>
    </ligand>
</feature>
<feature type="binding site" evidence="1">
    <location>
        <position position="21"/>
    </location>
    <ligand>
        <name>Mg(2+)</name>
        <dbReference type="ChEBI" id="CHEBI:18420"/>
    </ligand>
</feature>
<feature type="binding site" evidence="1">
    <location>
        <position position="23"/>
    </location>
    <ligand>
        <name>Mg(2+)</name>
        <dbReference type="ChEBI" id="CHEBI:18420"/>
    </ligand>
</feature>
<feature type="binding site" evidence="1">
    <location>
        <position position="91"/>
    </location>
    <ligand>
        <name>ATP</name>
        <dbReference type="ChEBI" id="CHEBI:30616"/>
    </ligand>
</feature>
<feature type="binding site" evidence="1">
    <location>
        <position position="91"/>
    </location>
    <ligand>
        <name>CTP</name>
        <dbReference type="ChEBI" id="CHEBI:37563"/>
    </ligand>
</feature>
<feature type="binding site" evidence="1">
    <location>
        <position position="137"/>
    </location>
    <ligand>
        <name>ATP</name>
        <dbReference type="ChEBI" id="CHEBI:30616"/>
    </ligand>
</feature>
<feature type="binding site" evidence="1">
    <location>
        <position position="137"/>
    </location>
    <ligand>
        <name>CTP</name>
        <dbReference type="ChEBI" id="CHEBI:37563"/>
    </ligand>
</feature>
<feature type="binding site" evidence="1">
    <location>
        <position position="140"/>
    </location>
    <ligand>
        <name>ATP</name>
        <dbReference type="ChEBI" id="CHEBI:30616"/>
    </ligand>
</feature>
<feature type="binding site" evidence="1">
    <location>
        <position position="140"/>
    </location>
    <ligand>
        <name>CTP</name>
        <dbReference type="ChEBI" id="CHEBI:37563"/>
    </ligand>
</feature>
<protein>
    <recommendedName>
        <fullName evidence="1">Multifunctional CCA protein</fullName>
    </recommendedName>
    <domain>
        <recommendedName>
            <fullName evidence="1">CCA-adding enzyme</fullName>
            <ecNumber evidence="1">2.7.7.72</ecNumber>
        </recommendedName>
        <alternativeName>
            <fullName evidence="1">CCA tRNA nucleotidyltransferase</fullName>
        </alternativeName>
        <alternativeName>
            <fullName evidence="1">tRNA CCA-pyrophosphorylase</fullName>
        </alternativeName>
        <alternativeName>
            <fullName evidence="1">tRNA adenylyl-/cytidylyl-transferase</fullName>
        </alternativeName>
        <alternativeName>
            <fullName evidence="1">tRNA nucleotidyltransferase</fullName>
        </alternativeName>
        <alternativeName>
            <fullName evidence="1">tRNA-NT</fullName>
        </alternativeName>
    </domain>
    <domain>
        <recommendedName>
            <fullName evidence="1">2'-nucleotidase</fullName>
            <ecNumber evidence="1">3.1.3.-</ecNumber>
        </recommendedName>
    </domain>
    <domain>
        <recommendedName>
            <fullName evidence="1">2',3'-cyclic phosphodiesterase</fullName>
            <ecNumber evidence="1">3.1.4.-</ecNumber>
        </recommendedName>
    </domain>
    <domain>
        <recommendedName>
            <fullName evidence="1">Phosphatase</fullName>
            <ecNumber evidence="1">3.1.3.-</ecNumber>
        </recommendedName>
    </domain>
</protein>
<proteinExistence type="inferred from homology"/>